<feature type="chain" id="PRO_1000115147" description="Large ribosomal subunit protein bL33">
    <location>
        <begin position="1"/>
        <end position="55"/>
    </location>
</feature>
<feature type="region of interest" description="Disordered" evidence="2">
    <location>
        <begin position="1"/>
        <end position="32"/>
    </location>
</feature>
<feature type="compositionally biased region" description="Basic and acidic residues" evidence="2">
    <location>
        <begin position="1"/>
        <end position="11"/>
    </location>
</feature>
<feature type="compositionally biased region" description="Polar residues" evidence="2">
    <location>
        <begin position="13"/>
        <end position="24"/>
    </location>
</feature>
<protein>
    <recommendedName>
        <fullName evidence="1">Large ribosomal subunit protein bL33</fullName>
    </recommendedName>
    <alternativeName>
        <fullName evidence="3">50S ribosomal protein L33</fullName>
    </alternativeName>
</protein>
<proteinExistence type="inferred from homology"/>
<comment type="similarity">
    <text evidence="1">Belongs to the bacterial ribosomal protein bL33 family.</text>
</comment>
<evidence type="ECO:0000255" key="1">
    <source>
        <dbReference type="HAMAP-Rule" id="MF_00294"/>
    </source>
</evidence>
<evidence type="ECO:0000256" key="2">
    <source>
        <dbReference type="SAM" id="MobiDB-lite"/>
    </source>
</evidence>
<evidence type="ECO:0000305" key="3"/>
<organism>
    <name type="scientific">Polynucleobacter necessarius subsp. necessarius (strain STIR1)</name>
    <dbReference type="NCBI Taxonomy" id="452638"/>
    <lineage>
        <taxon>Bacteria</taxon>
        <taxon>Pseudomonadati</taxon>
        <taxon>Pseudomonadota</taxon>
        <taxon>Betaproteobacteria</taxon>
        <taxon>Burkholderiales</taxon>
        <taxon>Burkholderiaceae</taxon>
        <taxon>Polynucleobacter</taxon>
    </lineage>
</organism>
<accession>B1XW21</accession>
<gene>
    <name evidence="1" type="primary">rpmG</name>
    <name type="ordered locus">Pnec_1453</name>
</gene>
<keyword id="KW-0687">Ribonucleoprotein</keyword>
<keyword id="KW-0689">Ribosomal protein</keyword>
<reference key="1">
    <citation type="journal article" date="2013" name="Proc. Natl. Acad. Sci. U.S.A.">
        <title>Polynucleobacter necessarius, a model for genome reduction in both free-living and symbiotic bacteria.</title>
        <authorList>
            <person name="Boscaro V."/>
            <person name="Felletti M."/>
            <person name="Vannini C."/>
            <person name="Ackerman M.S."/>
            <person name="Chain P.S."/>
            <person name="Malfatti S."/>
            <person name="Vergez L.M."/>
            <person name="Shin M."/>
            <person name="Doak T.G."/>
            <person name="Lynch M."/>
            <person name="Petroni G."/>
        </authorList>
    </citation>
    <scope>NUCLEOTIDE SEQUENCE [LARGE SCALE GENOMIC DNA]</scope>
    <source>
        <strain>STIR1</strain>
    </source>
</reference>
<dbReference type="EMBL" id="CP001010">
    <property type="protein sequence ID" value="ACB44548.1"/>
    <property type="molecule type" value="Genomic_DNA"/>
</dbReference>
<dbReference type="SMR" id="B1XW21"/>
<dbReference type="STRING" id="452638.Pnec_1453"/>
<dbReference type="KEGG" id="pne:Pnec_1453"/>
<dbReference type="eggNOG" id="COG0267">
    <property type="taxonomic scope" value="Bacteria"/>
</dbReference>
<dbReference type="HOGENOM" id="CLU_190949_1_1_4"/>
<dbReference type="OrthoDB" id="21586at2"/>
<dbReference type="GO" id="GO:0022625">
    <property type="term" value="C:cytosolic large ribosomal subunit"/>
    <property type="evidence" value="ECO:0007669"/>
    <property type="project" value="TreeGrafter"/>
</dbReference>
<dbReference type="GO" id="GO:0003735">
    <property type="term" value="F:structural constituent of ribosome"/>
    <property type="evidence" value="ECO:0007669"/>
    <property type="project" value="InterPro"/>
</dbReference>
<dbReference type="GO" id="GO:0006412">
    <property type="term" value="P:translation"/>
    <property type="evidence" value="ECO:0007669"/>
    <property type="project" value="UniProtKB-UniRule"/>
</dbReference>
<dbReference type="FunFam" id="2.20.28.120:FF:000001">
    <property type="entry name" value="50S ribosomal protein L33"/>
    <property type="match status" value="1"/>
</dbReference>
<dbReference type="Gene3D" id="2.20.28.120">
    <property type="entry name" value="Ribosomal protein L33"/>
    <property type="match status" value="1"/>
</dbReference>
<dbReference type="HAMAP" id="MF_00294">
    <property type="entry name" value="Ribosomal_bL33"/>
    <property type="match status" value="1"/>
</dbReference>
<dbReference type="InterPro" id="IPR001705">
    <property type="entry name" value="Ribosomal_bL33"/>
</dbReference>
<dbReference type="InterPro" id="IPR018264">
    <property type="entry name" value="Ribosomal_bL33_CS"/>
</dbReference>
<dbReference type="InterPro" id="IPR038584">
    <property type="entry name" value="Ribosomal_bL33_sf"/>
</dbReference>
<dbReference type="InterPro" id="IPR011332">
    <property type="entry name" value="Ribosomal_zn-bd"/>
</dbReference>
<dbReference type="NCBIfam" id="NF001860">
    <property type="entry name" value="PRK00595.1"/>
    <property type="match status" value="1"/>
</dbReference>
<dbReference type="NCBIfam" id="TIGR01023">
    <property type="entry name" value="rpmG_bact"/>
    <property type="match status" value="1"/>
</dbReference>
<dbReference type="PANTHER" id="PTHR15238">
    <property type="entry name" value="54S RIBOSOMAL PROTEIN L39, MITOCHONDRIAL"/>
    <property type="match status" value="1"/>
</dbReference>
<dbReference type="PANTHER" id="PTHR15238:SF1">
    <property type="entry name" value="LARGE RIBOSOMAL SUBUNIT PROTEIN BL33M"/>
    <property type="match status" value="1"/>
</dbReference>
<dbReference type="Pfam" id="PF00471">
    <property type="entry name" value="Ribosomal_L33"/>
    <property type="match status" value="1"/>
</dbReference>
<dbReference type="SUPFAM" id="SSF57829">
    <property type="entry name" value="Zn-binding ribosomal proteins"/>
    <property type="match status" value="1"/>
</dbReference>
<dbReference type="PROSITE" id="PS00582">
    <property type="entry name" value="RIBOSOMAL_L33"/>
    <property type="match status" value="1"/>
</dbReference>
<name>RL33_POLNS</name>
<sequence>MAKGSREKIKLESSASTGHFYTTSKNKRTKPEKMEIMKFDPTIRKHVAYKETKLK</sequence>